<proteinExistence type="inferred from homology"/>
<reference key="1">
    <citation type="journal article" date="2011" name="J. Bacteriol.">
        <title>Comparative genomics of 28 Salmonella enterica isolates: evidence for CRISPR-mediated adaptive sublineage evolution.</title>
        <authorList>
            <person name="Fricke W.F."/>
            <person name="Mammel M.K."/>
            <person name="McDermott P.F."/>
            <person name="Tartera C."/>
            <person name="White D.G."/>
            <person name="Leclerc J.E."/>
            <person name="Ravel J."/>
            <person name="Cebula T.A."/>
        </authorList>
    </citation>
    <scope>NUCLEOTIDE SEQUENCE [LARGE SCALE GENOMIC DNA]</scope>
    <source>
        <strain>SL476</strain>
    </source>
</reference>
<comment type="function">
    <text evidence="1">The alpha subunit is responsible for the aldol cleavage of indoleglycerol phosphate to indole and glyceraldehyde 3-phosphate.</text>
</comment>
<comment type="catalytic activity">
    <reaction evidence="1">
        <text>(1S,2R)-1-C-(indol-3-yl)glycerol 3-phosphate + L-serine = D-glyceraldehyde 3-phosphate + L-tryptophan + H2O</text>
        <dbReference type="Rhea" id="RHEA:10532"/>
        <dbReference type="ChEBI" id="CHEBI:15377"/>
        <dbReference type="ChEBI" id="CHEBI:33384"/>
        <dbReference type="ChEBI" id="CHEBI:57912"/>
        <dbReference type="ChEBI" id="CHEBI:58866"/>
        <dbReference type="ChEBI" id="CHEBI:59776"/>
        <dbReference type="EC" id="4.2.1.20"/>
    </reaction>
</comment>
<comment type="pathway">
    <text evidence="1">Amino-acid biosynthesis; L-tryptophan biosynthesis; L-tryptophan from chorismate: step 5/5.</text>
</comment>
<comment type="subunit">
    <text evidence="1">Tetramer of two alpha and two beta chains.</text>
</comment>
<comment type="similarity">
    <text evidence="1">Belongs to the TrpA family.</text>
</comment>
<protein>
    <recommendedName>
        <fullName evidence="1">Tryptophan synthase alpha chain</fullName>
        <ecNumber evidence="1">4.2.1.20</ecNumber>
    </recommendedName>
</protein>
<accession>B4TJK9</accession>
<name>TRPA_SALHS</name>
<gene>
    <name evidence="1" type="primary">trpA</name>
    <name type="ordered locus">SeHA_C1917</name>
</gene>
<keyword id="KW-0028">Amino-acid biosynthesis</keyword>
<keyword id="KW-0057">Aromatic amino acid biosynthesis</keyword>
<keyword id="KW-0456">Lyase</keyword>
<keyword id="KW-0822">Tryptophan biosynthesis</keyword>
<feature type="chain" id="PRO_1000095750" description="Tryptophan synthase alpha chain">
    <location>
        <begin position="1"/>
        <end position="268"/>
    </location>
</feature>
<feature type="active site" description="Proton acceptor" evidence="1">
    <location>
        <position position="49"/>
    </location>
</feature>
<feature type="active site" description="Proton acceptor" evidence="1">
    <location>
        <position position="60"/>
    </location>
</feature>
<dbReference type="EC" id="4.2.1.20" evidence="1"/>
<dbReference type="EMBL" id="CP001120">
    <property type="protein sequence ID" value="ACF69359.1"/>
    <property type="molecule type" value="Genomic_DNA"/>
</dbReference>
<dbReference type="RefSeq" id="WP_000443029.1">
    <property type="nucleotide sequence ID" value="NC_011083.1"/>
</dbReference>
<dbReference type="SMR" id="B4TJK9"/>
<dbReference type="KEGG" id="seh:SeHA_C1917"/>
<dbReference type="HOGENOM" id="CLU_016734_0_4_6"/>
<dbReference type="UniPathway" id="UPA00035">
    <property type="reaction ID" value="UER00044"/>
</dbReference>
<dbReference type="Proteomes" id="UP000001866">
    <property type="component" value="Chromosome"/>
</dbReference>
<dbReference type="GO" id="GO:0005829">
    <property type="term" value="C:cytosol"/>
    <property type="evidence" value="ECO:0007669"/>
    <property type="project" value="TreeGrafter"/>
</dbReference>
<dbReference type="GO" id="GO:0004834">
    <property type="term" value="F:tryptophan synthase activity"/>
    <property type="evidence" value="ECO:0007669"/>
    <property type="project" value="UniProtKB-UniRule"/>
</dbReference>
<dbReference type="CDD" id="cd04724">
    <property type="entry name" value="Tryptophan_synthase_alpha"/>
    <property type="match status" value="1"/>
</dbReference>
<dbReference type="FunFam" id="3.20.20.70:FF:000037">
    <property type="entry name" value="Tryptophan synthase alpha chain"/>
    <property type="match status" value="1"/>
</dbReference>
<dbReference type="Gene3D" id="3.20.20.70">
    <property type="entry name" value="Aldolase class I"/>
    <property type="match status" value="1"/>
</dbReference>
<dbReference type="HAMAP" id="MF_00131">
    <property type="entry name" value="Trp_synth_alpha"/>
    <property type="match status" value="1"/>
</dbReference>
<dbReference type="InterPro" id="IPR013785">
    <property type="entry name" value="Aldolase_TIM"/>
</dbReference>
<dbReference type="InterPro" id="IPR011060">
    <property type="entry name" value="RibuloseP-bd_barrel"/>
</dbReference>
<dbReference type="InterPro" id="IPR018204">
    <property type="entry name" value="Trp_synthase_alpha_AS"/>
</dbReference>
<dbReference type="InterPro" id="IPR002028">
    <property type="entry name" value="Trp_synthase_suA"/>
</dbReference>
<dbReference type="NCBIfam" id="TIGR00262">
    <property type="entry name" value="trpA"/>
    <property type="match status" value="1"/>
</dbReference>
<dbReference type="PANTHER" id="PTHR43406:SF1">
    <property type="entry name" value="TRYPTOPHAN SYNTHASE ALPHA CHAIN, CHLOROPLASTIC"/>
    <property type="match status" value="1"/>
</dbReference>
<dbReference type="PANTHER" id="PTHR43406">
    <property type="entry name" value="TRYPTOPHAN SYNTHASE, ALPHA CHAIN"/>
    <property type="match status" value="1"/>
</dbReference>
<dbReference type="Pfam" id="PF00290">
    <property type="entry name" value="Trp_syntA"/>
    <property type="match status" value="1"/>
</dbReference>
<dbReference type="SUPFAM" id="SSF51366">
    <property type="entry name" value="Ribulose-phoshate binding barrel"/>
    <property type="match status" value="1"/>
</dbReference>
<dbReference type="PROSITE" id="PS00167">
    <property type="entry name" value="TRP_SYNTHASE_ALPHA"/>
    <property type="match status" value="1"/>
</dbReference>
<evidence type="ECO:0000255" key="1">
    <source>
        <dbReference type="HAMAP-Rule" id="MF_00131"/>
    </source>
</evidence>
<organism>
    <name type="scientific">Salmonella heidelberg (strain SL476)</name>
    <dbReference type="NCBI Taxonomy" id="454169"/>
    <lineage>
        <taxon>Bacteria</taxon>
        <taxon>Pseudomonadati</taxon>
        <taxon>Pseudomonadota</taxon>
        <taxon>Gammaproteobacteria</taxon>
        <taxon>Enterobacterales</taxon>
        <taxon>Enterobacteriaceae</taxon>
        <taxon>Salmonella</taxon>
    </lineage>
</organism>
<sequence>MERYENLFAQLNDRREGAFVPFVTLGDPGIEQSLKIIDTLIDAGADALELGVPFSDPLADGPTIQNANLRAFAAGVTPAQCFEMLALIREKHPTIPIGLLMYANLVFNNGIDAFYARCEQVGVDSVLVADVPVEESAPFRQAALRHNIAPIFICPPNADDDLLRQVASYGRGYTYLLSRSGVTGAENRGALPLHHLIEKLKEYHAAPALQGFGISSPEQVSAAVRAGAAGAISGSAIVKIIEKNLASPEQMLAELRSFVSAMKAASRA</sequence>